<organism>
    <name type="scientific">Acanthamoeba polyphaga mimivirus</name>
    <name type="common">APMV</name>
    <dbReference type="NCBI Taxonomy" id="212035"/>
    <lineage>
        <taxon>Viruses</taxon>
        <taxon>Varidnaviria</taxon>
        <taxon>Bamfordvirae</taxon>
        <taxon>Nucleocytoviricota</taxon>
        <taxon>Megaviricetes</taxon>
        <taxon>Imitervirales</taxon>
        <taxon>Mimiviridae</taxon>
        <taxon>Megamimivirinae</taxon>
        <taxon>Mimivirus</taxon>
        <taxon>Mimivirus bradfordmassiliense</taxon>
    </lineage>
</organism>
<proteinExistence type="predicted"/>
<dbReference type="EMBL" id="AY653733">
    <property type="protein sequence ID" value="AAV50860.1"/>
    <property type="molecule type" value="Genomic_DNA"/>
</dbReference>
<dbReference type="SMR" id="Q5UP66"/>
<dbReference type="KEGG" id="vg:9925234"/>
<dbReference type="Proteomes" id="UP000001134">
    <property type="component" value="Genome"/>
</dbReference>
<dbReference type="Gene3D" id="1.25.40.20">
    <property type="entry name" value="Ankyrin repeat-containing domain"/>
    <property type="match status" value="1"/>
</dbReference>
<dbReference type="InterPro" id="IPR036770">
    <property type="entry name" value="Ankyrin_rpt-contain_sf"/>
</dbReference>
<dbReference type="SUPFAM" id="SSF48403">
    <property type="entry name" value="Ankyrin repeat"/>
    <property type="match status" value="1"/>
</dbReference>
<feature type="chain" id="PRO_0000067176" description="Putative ankyrin repeat protein R597">
    <location>
        <begin position="1"/>
        <end position="274"/>
    </location>
</feature>
<feature type="repeat" description="ANK 1">
    <location>
        <begin position="78"/>
        <end position="112"/>
    </location>
</feature>
<feature type="repeat" description="ANK 2">
    <location>
        <begin position="114"/>
        <end position="144"/>
    </location>
</feature>
<feature type="repeat" description="ANK 3">
    <location>
        <begin position="146"/>
        <end position="174"/>
    </location>
</feature>
<feature type="repeat" description="ANK 4">
    <location>
        <begin position="176"/>
        <end position="205"/>
    </location>
</feature>
<sequence length="274" mass="32179">MSVNDNINHNKKLLEKYVIEDDLYNFTQLINEVSCDDEFGYKLTTIATQEASINIIKYVFDTDIIKCFPKHQMLRYAVGLPSLGYFTKNKDEFHNSLELMKLLLQYDMNNNDFPISEYLYNAVKQNNFEKVKLLIDNGINSLKIISRYHFENKYIYNNHEIVKYMIDNGVDIQGFNLSYALHSCIISDNNDGVEYYFNIGANINDLDLESVVTIIKYNRIQKLFDYSYNFNKLDYLLDNEENNNYDEALNMLVELTSIKTKNVCVLLSLIMSKY</sequence>
<gene>
    <name type="ordered locus">MIMI_R597</name>
</gene>
<keyword id="KW-0040">ANK repeat</keyword>
<keyword id="KW-1185">Reference proteome</keyword>
<keyword id="KW-0677">Repeat</keyword>
<name>YR597_MIMIV</name>
<reference key="1">
    <citation type="journal article" date="2004" name="Science">
        <title>The 1.2-megabase genome sequence of Mimivirus.</title>
        <authorList>
            <person name="Raoult D."/>
            <person name="Audic S."/>
            <person name="Robert C."/>
            <person name="Abergel C."/>
            <person name="Renesto P."/>
            <person name="Ogata H."/>
            <person name="La Scola B."/>
            <person name="Susan M."/>
            <person name="Claverie J.-M."/>
        </authorList>
    </citation>
    <scope>NUCLEOTIDE SEQUENCE [LARGE SCALE GENOMIC DNA]</scope>
    <source>
        <strain>Rowbotham-Bradford</strain>
    </source>
</reference>
<organismHost>
    <name type="scientific">Acanthamoeba polyphaga</name>
    <name type="common">Amoeba</name>
    <dbReference type="NCBI Taxonomy" id="5757"/>
</organismHost>
<accession>Q5UP66</accession>
<protein>
    <recommendedName>
        <fullName>Putative ankyrin repeat protein R597</fullName>
    </recommendedName>
</protein>